<name>RL28_PSEPF</name>
<organism>
    <name type="scientific">Pseudomonas fluorescens (strain Pf0-1)</name>
    <dbReference type="NCBI Taxonomy" id="205922"/>
    <lineage>
        <taxon>Bacteria</taxon>
        <taxon>Pseudomonadati</taxon>
        <taxon>Pseudomonadota</taxon>
        <taxon>Gammaproteobacteria</taxon>
        <taxon>Pseudomonadales</taxon>
        <taxon>Pseudomonadaceae</taxon>
        <taxon>Pseudomonas</taxon>
    </lineage>
</organism>
<comment type="similarity">
    <text evidence="1">Belongs to the bacterial ribosomal protein bL28 family.</text>
</comment>
<gene>
    <name evidence="1" type="primary">rpmB</name>
    <name type="ordered locus">Pfl01_5537</name>
</gene>
<feature type="chain" id="PRO_1000007317" description="Large ribosomal subunit protein bL28">
    <location>
        <begin position="1"/>
        <end position="77"/>
    </location>
</feature>
<feature type="region of interest" description="Disordered" evidence="2">
    <location>
        <begin position="1"/>
        <end position="20"/>
    </location>
</feature>
<sequence>MSRVCQVTGKGPVTGNNISHANNKTRRRFLPNLQHHRFWVEEEKRFVRLRVSAKGMRIIDKRGISVVLAELRRDGKV</sequence>
<protein>
    <recommendedName>
        <fullName evidence="1">Large ribosomal subunit protein bL28</fullName>
    </recommendedName>
    <alternativeName>
        <fullName evidence="3">50S ribosomal protein L28</fullName>
    </alternativeName>
</protein>
<keyword id="KW-0687">Ribonucleoprotein</keyword>
<keyword id="KW-0689">Ribosomal protein</keyword>
<reference key="1">
    <citation type="journal article" date="2009" name="Genome Biol.">
        <title>Genomic and genetic analyses of diversity and plant interactions of Pseudomonas fluorescens.</title>
        <authorList>
            <person name="Silby M.W."/>
            <person name="Cerdeno-Tarraga A.M."/>
            <person name="Vernikos G.S."/>
            <person name="Giddens S.R."/>
            <person name="Jackson R.W."/>
            <person name="Preston G.M."/>
            <person name="Zhang X.-X."/>
            <person name="Moon C.D."/>
            <person name="Gehrig S.M."/>
            <person name="Godfrey S.A.C."/>
            <person name="Knight C.G."/>
            <person name="Malone J.G."/>
            <person name="Robinson Z."/>
            <person name="Spiers A.J."/>
            <person name="Harris S."/>
            <person name="Challis G.L."/>
            <person name="Yaxley A.M."/>
            <person name="Harris D."/>
            <person name="Seeger K."/>
            <person name="Murphy L."/>
            <person name="Rutter S."/>
            <person name="Squares R."/>
            <person name="Quail M.A."/>
            <person name="Saunders E."/>
            <person name="Mavromatis K."/>
            <person name="Brettin T.S."/>
            <person name="Bentley S.D."/>
            <person name="Hothersall J."/>
            <person name="Stephens E."/>
            <person name="Thomas C.M."/>
            <person name="Parkhill J."/>
            <person name="Levy S.B."/>
            <person name="Rainey P.B."/>
            <person name="Thomson N.R."/>
        </authorList>
    </citation>
    <scope>NUCLEOTIDE SEQUENCE [LARGE SCALE GENOMIC DNA]</scope>
    <source>
        <strain>Pf0-1</strain>
    </source>
</reference>
<evidence type="ECO:0000255" key="1">
    <source>
        <dbReference type="HAMAP-Rule" id="MF_00373"/>
    </source>
</evidence>
<evidence type="ECO:0000256" key="2">
    <source>
        <dbReference type="SAM" id="MobiDB-lite"/>
    </source>
</evidence>
<evidence type="ECO:0000305" key="3"/>
<proteinExistence type="inferred from homology"/>
<dbReference type="EMBL" id="CP000094">
    <property type="protein sequence ID" value="ABA77274.1"/>
    <property type="molecule type" value="Genomic_DNA"/>
</dbReference>
<dbReference type="RefSeq" id="WP_003177273.1">
    <property type="nucleotide sequence ID" value="NC_007492.2"/>
</dbReference>
<dbReference type="SMR" id="Q3K4N0"/>
<dbReference type="GeneID" id="98108370"/>
<dbReference type="KEGG" id="pfo:Pfl01_5537"/>
<dbReference type="eggNOG" id="COG0227">
    <property type="taxonomic scope" value="Bacteria"/>
</dbReference>
<dbReference type="HOGENOM" id="CLU_064548_3_1_6"/>
<dbReference type="Proteomes" id="UP000002704">
    <property type="component" value="Chromosome"/>
</dbReference>
<dbReference type="GO" id="GO:0022625">
    <property type="term" value="C:cytosolic large ribosomal subunit"/>
    <property type="evidence" value="ECO:0007669"/>
    <property type="project" value="TreeGrafter"/>
</dbReference>
<dbReference type="GO" id="GO:0003735">
    <property type="term" value="F:structural constituent of ribosome"/>
    <property type="evidence" value="ECO:0007669"/>
    <property type="project" value="InterPro"/>
</dbReference>
<dbReference type="GO" id="GO:0006412">
    <property type="term" value="P:translation"/>
    <property type="evidence" value="ECO:0007669"/>
    <property type="project" value="UniProtKB-UniRule"/>
</dbReference>
<dbReference type="FunFam" id="2.30.170.40:FF:000001">
    <property type="entry name" value="50S ribosomal protein L28"/>
    <property type="match status" value="1"/>
</dbReference>
<dbReference type="Gene3D" id="2.30.170.40">
    <property type="entry name" value="Ribosomal protein L28/L24"/>
    <property type="match status" value="1"/>
</dbReference>
<dbReference type="HAMAP" id="MF_00373">
    <property type="entry name" value="Ribosomal_bL28"/>
    <property type="match status" value="1"/>
</dbReference>
<dbReference type="InterPro" id="IPR026569">
    <property type="entry name" value="Ribosomal_bL28"/>
</dbReference>
<dbReference type="InterPro" id="IPR034704">
    <property type="entry name" value="Ribosomal_bL28/bL31-like_sf"/>
</dbReference>
<dbReference type="InterPro" id="IPR001383">
    <property type="entry name" value="Ribosomal_bL28_bact-type"/>
</dbReference>
<dbReference type="InterPro" id="IPR037147">
    <property type="entry name" value="Ribosomal_bL28_sf"/>
</dbReference>
<dbReference type="NCBIfam" id="TIGR00009">
    <property type="entry name" value="L28"/>
    <property type="match status" value="1"/>
</dbReference>
<dbReference type="PANTHER" id="PTHR13528">
    <property type="entry name" value="39S RIBOSOMAL PROTEIN L28, MITOCHONDRIAL"/>
    <property type="match status" value="1"/>
</dbReference>
<dbReference type="PANTHER" id="PTHR13528:SF2">
    <property type="entry name" value="LARGE RIBOSOMAL SUBUNIT PROTEIN BL28M"/>
    <property type="match status" value="1"/>
</dbReference>
<dbReference type="Pfam" id="PF00830">
    <property type="entry name" value="Ribosomal_L28"/>
    <property type="match status" value="1"/>
</dbReference>
<dbReference type="SUPFAM" id="SSF143800">
    <property type="entry name" value="L28p-like"/>
    <property type="match status" value="1"/>
</dbReference>
<accession>Q3K4N0</accession>